<feature type="chain" id="PRO_1000138842" description="Orotate phosphoribosyltransferase">
    <location>
        <begin position="1"/>
        <end position="219"/>
    </location>
</feature>
<feature type="binding site" description="in other chain" evidence="1">
    <location>
        <position position="26"/>
    </location>
    <ligand>
        <name>5-phospho-alpha-D-ribose 1-diphosphate</name>
        <dbReference type="ChEBI" id="CHEBI:58017"/>
        <note>ligand shared between dimeric partners</note>
    </ligand>
</feature>
<feature type="binding site" evidence="1">
    <location>
        <begin position="34"/>
        <end position="35"/>
    </location>
    <ligand>
        <name>orotate</name>
        <dbReference type="ChEBI" id="CHEBI:30839"/>
    </ligand>
</feature>
<feature type="binding site" description="in other chain" evidence="1">
    <location>
        <begin position="72"/>
        <end position="73"/>
    </location>
    <ligand>
        <name>5-phospho-alpha-D-ribose 1-diphosphate</name>
        <dbReference type="ChEBI" id="CHEBI:58017"/>
        <note>ligand shared between dimeric partners</note>
    </ligand>
</feature>
<feature type="binding site" evidence="1">
    <location>
        <position position="98"/>
    </location>
    <ligand>
        <name>5-phospho-alpha-D-ribose 1-diphosphate</name>
        <dbReference type="ChEBI" id="CHEBI:58017"/>
        <note>ligand shared between dimeric partners</note>
    </ligand>
</feature>
<feature type="binding site" description="in other chain" evidence="1">
    <location>
        <position position="99"/>
    </location>
    <ligand>
        <name>5-phospho-alpha-D-ribose 1-diphosphate</name>
        <dbReference type="ChEBI" id="CHEBI:58017"/>
        <note>ligand shared between dimeric partners</note>
    </ligand>
</feature>
<feature type="binding site" evidence="1">
    <location>
        <position position="102"/>
    </location>
    <ligand>
        <name>5-phospho-alpha-D-ribose 1-diphosphate</name>
        <dbReference type="ChEBI" id="CHEBI:58017"/>
        <note>ligand shared between dimeric partners</note>
    </ligand>
</feature>
<feature type="binding site" evidence="1">
    <location>
        <position position="104"/>
    </location>
    <ligand>
        <name>5-phospho-alpha-D-ribose 1-diphosphate</name>
        <dbReference type="ChEBI" id="CHEBI:58017"/>
        <note>ligand shared between dimeric partners</note>
    </ligand>
</feature>
<feature type="binding site" description="in other chain" evidence="1">
    <location>
        <begin position="124"/>
        <end position="132"/>
    </location>
    <ligand>
        <name>5-phospho-alpha-D-ribose 1-diphosphate</name>
        <dbReference type="ChEBI" id="CHEBI:58017"/>
        <note>ligand shared between dimeric partners</note>
    </ligand>
</feature>
<feature type="binding site" evidence="1">
    <location>
        <position position="128"/>
    </location>
    <ligand>
        <name>orotate</name>
        <dbReference type="ChEBI" id="CHEBI:30839"/>
    </ligand>
</feature>
<feature type="binding site" evidence="1">
    <location>
        <position position="156"/>
    </location>
    <ligand>
        <name>orotate</name>
        <dbReference type="ChEBI" id="CHEBI:30839"/>
    </ligand>
</feature>
<dbReference type="EC" id="2.4.2.10" evidence="1"/>
<dbReference type="EMBL" id="CP001011">
    <property type="protein sequence ID" value="ACB91572.1"/>
    <property type="molecule type" value="Genomic_DNA"/>
</dbReference>
<dbReference type="RefSeq" id="WP_004085506.1">
    <property type="nucleotide sequence ID" value="NC_010577.1"/>
</dbReference>
<dbReference type="SMR" id="B2I6N0"/>
<dbReference type="KEGG" id="xfn:XfasM23_0115"/>
<dbReference type="HOGENOM" id="CLU_074878_0_1_6"/>
<dbReference type="UniPathway" id="UPA00070">
    <property type="reaction ID" value="UER00119"/>
</dbReference>
<dbReference type="Proteomes" id="UP000001698">
    <property type="component" value="Chromosome"/>
</dbReference>
<dbReference type="GO" id="GO:0005737">
    <property type="term" value="C:cytoplasm"/>
    <property type="evidence" value="ECO:0007669"/>
    <property type="project" value="TreeGrafter"/>
</dbReference>
<dbReference type="GO" id="GO:0000287">
    <property type="term" value="F:magnesium ion binding"/>
    <property type="evidence" value="ECO:0007669"/>
    <property type="project" value="UniProtKB-UniRule"/>
</dbReference>
<dbReference type="GO" id="GO:0004588">
    <property type="term" value="F:orotate phosphoribosyltransferase activity"/>
    <property type="evidence" value="ECO:0007669"/>
    <property type="project" value="UniProtKB-UniRule"/>
</dbReference>
<dbReference type="GO" id="GO:0006207">
    <property type="term" value="P:'de novo' pyrimidine nucleobase biosynthetic process"/>
    <property type="evidence" value="ECO:0007669"/>
    <property type="project" value="TreeGrafter"/>
</dbReference>
<dbReference type="GO" id="GO:0044205">
    <property type="term" value="P:'de novo' UMP biosynthetic process"/>
    <property type="evidence" value="ECO:0007669"/>
    <property type="project" value="UniProtKB-UniRule"/>
</dbReference>
<dbReference type="GO" id="GO:0046132">
    <property type="term" value="P:pyrimidine ribonucleoside biosynthetic process"/>
    <property type="evidence" value="ECO:0007669"/>
    <property type="project" value="TreeGrafter"/>
</dbReference>
<dbReference type="CDD" id="cd06223">
    <property type="entry name" value="PRTases_typeI"/>
    <property type="match status" value="1"/>
</dbReference>
<dbReference type="FunFam" id="3.40.50.2020:FF:000052">
    <property type="entry name" value="Orotate phosphoribosyltransferase"/>
    <property type="match status" value="1"/>
</dbReference>
<dbReference type="Gene3D" id="3.40.50.2020">
    <property type="match status" value="1"/>
</dbReference>
<dbReference type="HAMAP" id="MF_01208">
    <property type="entry name" value="PyrE"/>
    <property type="match status" value="1"/>
</dbReference>
<dbReference type="InterPro" id="IPR023031">
    <property type="entry name" value="OPRT"/>
</dbReference>
<dbReference type="InterPro" id="IPR004467">
    <property type="entry name" value="Or_phspho_trans_dom"/>
</dbReference>
<dbReference type="InterPro" id="IPR000836">
    <property type="entry name" value="PRibTrfase_dom"/>
</dbReference>
<dbReference type="InterPro" id="IPR029057">
    <property type="entry name" value="PRTase-like"/>
</dbReference>
<dbReference type="NCBIfam" id="TIGR00336">
    <property type="entry name" value="pyrE"/>
    <property type="match status" value="1"/>
</dbReference>
<dbReference type="PANTHER" id="PTHR46683">
    <property type="entry name" value="OROTATE PHOSPHORIBOSYLTRANSFERASE 1-RELATED"/>
    <property type="match status" value="1"/>
</dbReference>
<dbReference type="PANTHER" id="PTHR46683:SF1">
    <property type="entry name" value="OROTATE PHOSPHORIBOSYLTRANSFERASE 1-RELATED"/>
    <property type="match status" value="1"/>
</dbReference>
<dbReference type="Pfam" id="PF00156">
    <property type="entry name" value="Pribosyltran"/>
    <property type="match status" value="1"/>
</dbReference>
<dbReference type="SUPFAM" id="SSF53271">
    <property type="entry name" value="PRTase-like"/>
    <property type="match status" value="1"/>
</dbReference>
<dbReference type="PROSITE" id="PS00103">
    <property type="entry name" value="PUR_PYR_PR_TRANSFER"/>
    <property type="match status" value="1"/>
</dbReference>
<organism>
    <name type="scientific">Xylella fastidiosa (strain M23)</name>
    <dbReference type="NCBI Taxonomy" id="405441"/>
    <lineage>
        <taxon>Bacteria</taxon>
        <taxon>Pseudomonadati</taxon>
        <taxon>Pseudomonadota</taxon>
        <taxon>Gammaproteobacteria</taxon>
        <taxon>Lysobacterales</taxon>
        <taxon>Lysobacteraceae</taxon>
        <taxon>Xylella</taxon>
    </lineage>
</organism>
<protein>
    <recommendedName>
        <fullName evidence="1">Orotate phosphoribosyltransferase</fullName>
        <shortName evidence="1">OPRT</shortName>
        <shortName evidence="1">OPRTase</shortName>
        <ecNumber evidence="1">2.4.2.10</ecNumber>
    </recommendedName>
</protein>
<name>PYRE_XYLF2</name>
<proteinExistence type="inferred from homology"/>
<keyword id="KW-0328">Glycosyltransferase</keyword>
<keyword id="KW-0460">Magnesium</keyword>
<keyword id="KW-0665">Pyrimidine biosynthesis</keyword>
<keyword id="KW-0808">Transferase</keyword>
<evidence type="ECO:0000255" key="1">
    <source>
        <dbReference type="HAMAP-Rule" id="MF_01208"/>
    </source>
</evidence>
<reference key="1">
    <citation type="journal article" date="2010" name="J. Bacteriol.">
        <title>Whole genome sequences of two Xylella fastidiosa strains (M12 and M23) causing almond leaf scorch disease in California.</title>
        <authorList>
            <person name="Chen J."/>
            <person name="Xie G."/>
            <person name="Han S."/>
            <person name="Chertkov O."/>
            <person name="Sims D."/>
            <person name="Civerolo E.L."/>
        </authorList>
    </citation>
    <scope>NUCLEOTIDE SEQUENCE [LARGE SCALE GENOMIC DNA]</scope>
    <source>
        <strain>M23</strain>
    </source>
</reference>
<sequence length="219" mass="23677">MSHYRQRFLQLALDSNALCFGEFTLKSGRISPYFFNAGHFNSGAKTAALAQCYADAIDAANMNFDLVFGPAYKGIPLATALACEYARRERDLLLTFNRKEVKNHGEGGTLIGAPLNGRKILIIDDVITAGTAIREALRIIRNAGGTPTGIAVALNRQEIASETNRQSSVQALMAETGIPVVAIATLSDLLAFVEENASLAKFYEPLLAYKTHYGTEASD</sequence>
<accession>B2I6N0</accession>
<gene>
    <name evidence="1" type="primary">pyrE</name>
    <name type="ordered locus">XfasM23_0115</name>
</gene>
<comment type="function">
    <text evidence="1">Catalyzes the transfer of a ribosyl phosphate group from 5-phosphoribose 1-diphosphate to orotate, leading to the formation of orotidine monophosphate (OMP).</text>
</comment>
<comment type="catalytic activity">
    <reaction evidence="1">
        <text>orotidine 5'-phosphate + diphosphate = orotate + 5-phospho-alpha-D-ribose 1-diphosphate</text>
        <dbReference type="Rhea" id="RHEA:10380"/>
        <dbReference type="ChEBI" id="CHEBI:30839"/>
        <dbReference type="ChEBI" id="CHEBI:33019"/>
        <dbReference type="ChEBI" id="CHEBI:57538"/>
        <dbReference type="ChEBI" id="CHEBI:58017"/>
        <dbReference type="EC" id="2.4.2.10"/>
    </reaction>
</comment>
<comment type="cofactor">
    <cofactor evidence="1">
        <name>Mg(2+)</name>
        <dbReference type="ChEBI" id="CHEBI:18420"/>
    </cofactor>
</comment>
<comment type="pathway">
    <text evidence="1">Pyrimidine metabolism; UMP biosynthesis via de novo pathway; UMP from orotate: step 1/2.</text>
</comment>
<comment type="subunit">
    <text evidence="1">Homodimer.</text>
</comment>
<comment type="similarity">
    <text evidence="1">Belongs to the purine/pyrimidine phosphoribosyltransferase family. PyrE subfamily.</text>
</comment>